<accession>C4Y7U0</accession>
<proteinExistence type="inferred from homology"/>
<feature type="chain" id="PRO_0000388201" description="ATPase GET3">
    <location>
        <begin position="1"/>
        <end position="349"/>
    </location>
</feature>
<feature type="active site" evidence="1">
    <location>
        <position position="57"/>
    </location>
</feature>
<feature type="binding site" evidence="1">
    <location>
        <begin position="26"/>
        <end position="33"/>
    </location>
    <ligand>
        <name>ATP</name>
        <dbReference type="ChEBI" id="CHEBI:30616"/>
    </ligand>
</feature>
<feature type="binding site" evidence="1">
    <location>
        <position position="243"/>
    </location>
    <ligand>
        <name>ATP</name>
        <dbReference type="ChEBI" id="CHEBI:30616"/>
    </ligand>
</feature>
<feature type="binding site" evidence="1">
    <location>
        <position position="270"/>
    </location>
    <ligand>
        <name>ATP</name>
        <dbReference type="ChEBI" id="CHEBI:30616"/>
    </ligand>
</feature>
<feature type="binding site" evidence="1">
    <location>
        <position position="280"/>
    </location>
    <ligand>
        <name>Zn(2+)</name>
        <dbReference type="ChEBI" id="CHEBI:29105"/>
        <note>ligand shared between dimeric partners</note>
    </ligand>
</feature>
<feature type="binding site" evidence="1">
    <location>
        <position position="283"/>
    </location>
    <ligand>
        <name>Zn(2+)</name>
        <dbReference type="ChEBI" id="CHEBI:29105"/>
        <note>ligand shared between dimeric partners</note>
    </ligand>
</feature>
<dbReference type="EC" id="3.6.-.-" evidence="1"/>
<dbReference type="EMBL" id="CH408080">
    <property type="protein sequence ID" value="EEQ40140.1"/>
    <property type="molecule type" value="Genomic_DNA"/>
</dbReference>
<dbReference type="RefSeq" id="XP_002615386.1">
    <property type="nucleotide sequence ID" value="XM_002615340.1"/>
</dbReference>
<dbReference type="SMR" id="C4Y7U0"/>
<dbReference type="FunCoup" id="C4Y7U0">
    <property type="interactions" value="961"/>
</dbReference>
<dbReference type="STRING" id="306902.C4Y7U0"/>
<dbReference type="GeneID" id="8496207"/>
<dbReference type="KEGG" id="clu:CLUG_04268"/>
<dbReference type="VEuPathDB" id="FungiDB:CLUG_04268"/>
<dbReference type="HOGENOM" id="CLU_040761_0_0_1"/>
<dbReference type="InParanoid" id="C4Y7U0"/>
<dbReference type="OMA" id="MDAPYEF"/>
<dbReference type="OrthoDB" id="81864at4891"/>
<dbReference type="Proteomes" id="UP000007703">
    <property type="component" value="Unassembled WGS sequence"/>
</dbReference>
<dbReference type="GO" id="GO:0043529">
    <property type="term" value="C:GET complex"/>
    <property type="evidence" value="ECO:0007669"/>
    <property type="project" value="TreeGrafter"/>
</dbReference>
<dbReference type="GO" id="GO:0005794">
    <property type="term" value="C:Golgi apparatus"/>
    <property type="evidence" value="ECO:0007669"/>
    <property type="project" value="UniProtKB-SubCell"/>
</dbReference>
<dbReference type="GO" id="GO:0005524">
    <property type="term" value="F:ATP binding"/>
    <property type="evidence" value="ECO:0007669"/>
    <property type="project" value="UniProtKB-UniRule"/>
</dbReference>
<dbReference type="GO" id="GO:0016887">
    <property type="term" value="F:ATP hydrolysis activity"/>
    <property type="evidence" value="ECO:0007669"/>
    <property type="project" value="InterPro"/>
</dbReference>
<dbReference type="GO" id="GO:0046872">
    <property type="term" value="F:metal ion binding"/>
    <property type="evidence" value="ECO:0007669"/>
    <property type="project" value="UniProtKB-KW"/>
</dbReference>
<dbReference type="GO" id="GO:0071816">
    <property type="term" value="P:tail-anchored membrane protein insertion into ER membrane"/>
    <property type="evidence" value="ECO:0007669"/>
    <property type="project" value="TreeGrafter"/>
</dbReference>
<dbReference type="CDD" id="cd02035">
    <property type="entry name" value="ArsA"/>
    <property type="match status" value="1"/>
</dbReference>
<dbReference type="FunFam" id="3.40.50.300:FF:001359">
    <property type="entry name" value="ATPase GET3"/>
    <property type="match status" value="1"/>
</dbReference>
<dbReference type="Gene3D" id="3.40.50.300">
    <property type="entry name" value="P-loop containing nucleotide triphosphate hydrolases"/>
    <property type="match status" value="1"/>
</dbReference>
<dbReference type="HAMAP" id="MF_03112">
    <property type="entry name" value="Asna1_Get3"/>
    <property type="match status" value="1"/>
</dbReference>
<dbReference type="InterPro" id="IPR025723">
    <property type="entry name" value="Anion-transp_ATPase-like_dom"/>
</dbReference>
<dbReference type="InterPro" id="IPR016300">
    <property type="entry name" value="ATPase_ArsA/GET3"/>
</dbReference>
<dbReference type="InterPro" id="IPR027542">
    <property type="entry name" value="ATPase_ArsA/GET3_euk"/>
</dbReference>
<dbReference type="InterPro" id="IPR027417">
    <property type="entry name" value="P-loop_NTPase"/>
</dbReference>
<dbReference type="NCBIfam" id="TIGR00345">
    <property type="entry name" value="GET3_arsA_TRC40"/>
    <property type="match status" value="1"/>
</dbReference>
<dbReference type="PANTHER" id="PTHR10803">
    <property type="entry name" value="ARSENICAL PUMP-DRIVING ATPASE ARSENITE-TRANSLOCATING ATPASE"/>
    <property type="match status" value="1"/>
</dbReference>
<dbReference type="PANTHER" id="PTHR10803:SF3">
    <property type="entry name" value="ATPASE GET3"/>
    <property type="match status" value="1"/>
</dbReference>
<dbReference type="Pfam" id="PF02374">
    <property type="entry name" value="ArsA_ATPase"/>
    <property type="match status" value="1"/>
</dbReference>
<dbReference type="SUPFAM" id="SSF52540">
    <property type="entry name" value="P-loop containing nucleoside triphosphate hydrolases"/>
    <property type="match status" value="1"/>
</dbReference>
<name>GET3_CLAL4</name>
<organism>
    <name type="scientific">Clavispora lusitaniae (strain ATCC 42720)</name>
    <name type="common">Yeast</name>
    <name type="synonym">Candida lusitaniae</name>
    <dbReference type="NCBI Taxonomy" id="306902"/>
    <lineage>
        <taxon>Eukaryota</taxon>
        <taxon>Fungi</taxon>
        <taxon>Dikarya</taxon>
        <taxon>Ascomycota</taxon>
        <taxon>Saccharomycotina</taxon>
        <taxon>Pichiomycetes</taxon>
        <taxon>Metschnikowiaceae</taxon>
        <taxon>Clavispora</taxon>
    </lineage>
</organism>
<sequence length="349" mass="39349">MDFELEPTLESIIHQDSLKWIFVGGKGGVGKTTTSSSVAVQLALAYPNDEFLLISTDPAHNLSDAFCQKFGKDARKVEGLSNLSCMEIDPDAAMSDLQTQAQQYNNDPNDPLKSMMSDMTGSIPGIDEALSFMEVLKHIKNQRAADDGSESNAIQYKTIIFDTAPTGHTLRFLQLPATLEKLLAKFKDLSGKFGPMLNMLGGGTNQQQDIFSKMNEIQKSVSEVNEQFTNPDMTTFICVCISEFLSLYETERMIQELMSYNMDVNSIVVNQLLFAEEDDCKRCQSRWKMQKKYLDQMGELYEDYHLVKMPLLGSEIRGVNNLKKFSKFLLKPYDPKVDKALVFELEEAK</sequence>
<reference key="1">
    <citation type="journal article" date="2009" name="Nature">
        <title>Evolution of pathogenicity and sexual reproduction in eight Candida genomes.</title>
        <authorList>
            <person name="Butler G."/>
            <person name="Rasmussen M.D."/>
            <person name="Lin M.F."/>
            <person name="Santos M.A.S."/>
            <person name="Sakthikumar S."/>
            <person name="Munro C.A."/>
            <person name="Rheinbay E."/>
            <person name="Grabherr M."/>
            <person name="Forche A."/>
            <person name="Reedy J.L."/>
            <person name="Agrafioti I."/>
            <person name="Arnaud M.B."/>
            <person name="Bates S."/>
            <person name="Brown A.J.P."/>
            <person name="Brunke S."/>
            <person name="Costanzo M.C."/>
            <person name="Fitzpatrick D.A."/>
            <person name="de Groot P.W.J."/>
            <person name="Harris D."/>
            <person name="Hoyer L.L."/>
            <person name="Hube B."/>
            <person name="Klis F.M."/>
            <person name="Kodira C."/>
            <person name="Lennard N."/>
            <person name="Logue M.E."/>
            <person name="Martin R."/>
            <person name="Neiman A.M."/>
            <person name="Nikolaou E."/>
            <person name="Quail M.A."/>
            <person name="Quinn J."/>
            <person name="Santos M.C."/>
            <person name="Schmitzberger F.F."/>
            <person name="Sherlock G."/>
            <person name="Shah P."/>
            <person name="Silverstein K.A.T."/>
            <person name="Skrzypek M.S."/>
            <person name="Soll D."/>
            <person name="Staggs R."/>
            <person name="Stansfield I."/>
            <person name="Stumpf M.P.H."/>
            <person name="Sudbery P.E."/>
            <person name="Srikantha T."/>
            <person name="Zeng Q."/>
            <person name="Berman J."/>
            <person name="Berriman M."/>
            <person name="Heitman J."/>
            <person name="Gow N.A.R."/>
            <person name="Lorenz M.C."/>
            <person name="Birren B.W."/>
            <person name="Kellis M."/>
            <person name="Cuomo C.A."/>
        </authorList>
    </citation>
    <scope>NUCLEOTIDE SEQUENCE [LARGE SCALE GENOMIC DNA]</scope>
    <source>
        <strain>ATCC 42720</strain>
    </source>
</reference>
<protein>
    <recommendedName>
        <fullName evidence="1">ATPase GET3</fullName>
        <ecNumber evidence="1">3.6.-.-</ecNumber>
    </recommendedName>
    <alternativeName>
        <fullName evidence="1">Arsenical pump-driving ATPase</fullName>
    </alternativeName>
    <alternativeName>
        <fullName evidence="1">Arsenite-stimulated ATPase</fullName>
    </alternativeName>
    <alternativeName>
        <fullName evidence="1">Golgi to ER traffic protein 3</fullName>
    </alternativeName>
    <alternativeName>
        <fullName evidence="1">Guided entry of tail-anchored proteins 3</fullName>
    </alternativeName>
</protein>
<evidence type="ECO:0000255" key="1">
    <source>
        <dbReference type="HAMAP-Rule" id="MF_03112"/>
    </source>
</evidence>
<keyword id="KW-0067">ATP-binding</keyword>
<keyword id="KW-0963">Cytoplasm</keyword>
<keyword id="KW-0256">Endoplasmic reticulum</keyword>
<keyword id="KW-0333">Golgi apparatus</keyword>
<keyword id="KW-0378">Hydrolase</keyword>
<keyword id="KW-0479">Metal-binding</keyword>
<keyword id="KW-0547">Nucleotide-binding</keyword>
<keyword id="KW-1185">Reference proteome</keyword>
<keyword id="KW-0813">Transport</keyword>
<keyword id="KW-0862">Zinc</keyword>
<gene>
    <name evidence="1" type="primary">GET3</name>
    <name type="ORF">CLUG_04268</name>
</gene>
<comment type="function">
    <text evidence="1">ATPase required for the post-translational delivery of tail-anchored (TA) proteins to the endoplasmic reticulum. Recognizes and selectively binds the transmembrane domain of TA proteins in the cytosol. This complex then targets to the endoplasmic reticulum by membrane-bound receptors GET1 and GET2, where the tail-anchored protein is released for insertion. This process is regulated by ATP binding and hydrolysis. ATP binding drives the homodimer towards the closed dimer state, facilitating recognition of newly synthesized TA membrane proteins. ATP hydrolysis is required for insertion. Subsequently, the homodimer reverts towards the open dimer state, lowering its affinity for the GET1-GET2 receptor, and returning it to the cytosol to initiate a new round of targeting. Cooperates with the HDEL receptor ERD2 to mediate the ATP-dependent retrieval of resident ER proteins that contain a C-terminal H-D-E-L retention signal from the Golgi to the ER. Involved in low-level resistance to the oxyanions arsenite and arsenate, and in heat tolerance.</text>
</comment>
<comment type="subunit">
    <text evidence="1">Homodimer. Component of the Golgi to ER traffic (GET) complex, which is composed of GET1, GET2 and GET3. Within the complex, GET1 and GET2 form a heterotetramer which is stabilized by phosphatidylinositol binding and which binds to the GET3 homodimer. Interacts with the chloride channel protein GEF1.</text>
</comment>
<comment type="subcellular location">
    <subcellularLocation>
        <location evidence="1">Cytoplasm</location>
    </subcellularLocation>
    <subcellularLocation>
        <location evidence="1">Endoplasmic reticulum</location>
    </subcellularLocation>
    <subcellularLocation>
        <location evidence="1">Golgi apparatus</location>
    </subcellularLocation>
    <text evidence="1">GET1 and GET2 are required for targeting GET3 to the endoplasmic reticulum.</text>
</comment>
<comment type="similarity">
    <text evidence="1">Belongs to the arsA ATPase family.</text>
</comment>